<name>CEC3_CAEEL</name>
<accession>P45968</accession>
<evidence type="ECO:0000255" key="1">
    <source>
        <dbReference type="PROSITE-ProRule" id="PRU00053"/>
    </source>
</evidence>
<evidence type="ECO:0000256" key="2">
    <source>
        <dbReference type="SAM" id="MobiDB-lite"/>
    </source>
</evidence>
<evidence type="ECO:0000269" key="3">
    <source>
    </source>
</evidence>
<evidence type="ECO:0000269" key="4">
    <source>
    </source>
</evidence>
<evidence type="ECO:0000303" key="5">
    <source>
    </source>
</evidence>
<protein>
    <recommendedName>
        <fullName>Chromo domain-containing protein cec-3</fullName>
    </recommendedName>
    <alternativeName>
        <fullName evidence="5">Epigenetic memory antagonism protein 1</fullName>
    </alternativeName>
</protein>
<organism>
    <name type="scientific">Caenorhabditis elegans</name>
    <dbReference type="NCBI Taxonomy" id="6239"/>
    <lineage>
        <taxon>Eukaryota</taxon>
        <taxon>Metazoa</taxon>
        <taxon>Ecdysozoa</taxon>
        <taxon>Nematoda</taxon>
        <taxon>Chromadorea</taxon>
        <taxon>Rhabditida</taxon>
        <taxon>Rhabditina</taxon>
        <taxon>Rhabditomorpha</taxon>
        <taxon>Rhabditoidea</taxon>
        <taxon>Rhabditidae</taxon>
        <taxon>Peloderinae</taxon>
        <taxon>Caenorhabditis</taxon>
    </lineage>
</organism>
<comment type="function">
    <text evidence="3 4">Specifically recognizes and binds methylated 'Lys-9' of histone H3 (H3K9me), with highest preference for trimethylated 'Lys-9' (H3K9me3) followed by dimethylated 'Lys-9' (H3K9me2) followed by monomethylated 'Lys-9' (H3K9me1) (PubMed:24685137). Plays a role in maintaining correct unc-4 expression in the VC motor neurons where unc-4 is expressed in the vulval but not in the non-vulval VC neurons (PubMed:24348272).</text>
</comment>
<comment type="subcellular location">
    <subcellularLocation>
        <location evidence="4">Chromosome</location>
    </subcellularLocation>
    <subcellularLocation>
        <location evidence="4">Nucleus</location>
    </subcellularLocation>
    <text evidence="4">Colocalizes with H3K9me2/H3K9me3 in germline nuclei.</text>
</comment>
<comment type="tissue specificity">
    <text evidence="4">Expressed in every cell of the embryo (at protein level). In adults, expressed predominantly in the head region and the germline.</text>
</comment>
<comment type="disruption phenotype">
    <text evidence="3 4">Expression of unc-4 in all 6 VC motor neurons in contrast to wild-type expression which is only detected in the vulval VC neurons, leading to hyperinhibition of HSN neuron activity and egg-laying defects (PubMed:24348272). RNAi-mediated knockdown in an spr-5 mutant background suppresses progressive sterility and prevents accumulation of histone H3 'Lys-4' dimethylation (PubMed:24685137).</text>
</comment>
<gene>
    <name type="primary">cec-3</name>
    <name evidence="5" type="synonym">eap-1</name>
    <name type="ORF">T09A5.8</name>
</gene>
<reference key="1">
    <citation type="journal article" date="1998" name="Science">
        <title>Genome sequence of the nematode C. elegans: a platform for investigating biology.</title>
        <authorList>
            <consortium name="The C. elegans sequencing consortium"/>
        </authorList>
    </citation>
    <scope>NUCLEOTIDE SEQUENCE [LARGE SCALE GENOMIC DNA]</scope>
    <source>
        <strain>Bristol N2</strain>
    </source>
</reference>
<reference key="2">
    <citation type="journal article" date="2013" name="PLoS Genet.">
        <title>Histone methylation restrains the expression of subtype-specific genes during terminal neuronal differentiation in Caenorhabditis elegans.</title>
        <authorList>
            <person name="Zheng C."/>
            <person name="Karimzadegan S."/>
            <person name="Chiang V."/>
            <person name="Chalfie M."/>
        </authorList>
    </citation>
    <scope>FUNCTION</scope>
    <scope>DISRUPTION PHENOTYPE</scope>
</reference>
<reference key="3">
    <citation type="journal article" date="2014" name="Cell Rep.">
        <title>A histone methylation network regulates transgenerational epigenetic memory in C. elegans.</title>
        <authorList>
            <person name="Greer E.L."/>
            <person name="Beese-Sims S.E."/>
            <person name="Brookes E."/>
            <person name="Spadafora R."/>
            <person name="Zhu Y."/>
            <person name="Rothbart S.B."/>
            <person name="Aristizabal-Corrales D."/>
            <person name="Chen S."/>
            <person name="Badeaux A.I."/>
            <person name="Jin Q."/>
            <person name="Wang W."/>
            <person name="Strahl B.D."/>
            <person name="Colaiacovo M.P."/>
            <person name="Shi Y."/>
        </authorList>
    </citation>
    <scope>FUNCTION</scope>
    <scope>SUBCELLULAR LOCATION</scope>
    <scope>TISSUE SPECIFICITY</scope>
    <scope>DISRUPTION PHENOTYPE</scope>
    <scope>MUTAGENESIS OF PHE-24</scope>
</reference>
<keyword id="KW-0158">Chromosome</keyword>
<keyword id="KW-0238">DNA-binding</keyword>
<keyword id="KW-0539">Nucleus</keyword>
<keyword id="KW-1185">Reference proteome</keyword>
<dbReference type="EMBL" id="Z36753">
    <property type="protein sequence ID" value="CAA85339.1"/>
    <property type="molecule type" value="Genomic_DNA"/>
</dbReference>
<dbReference type="PIR" id="T24725">
    <property type="entry name" value="T24725"/>
</dbReference>
<dbReference type="RefSeq" id="NP_495652.1">
    <property type="nucleotide sequence ID" value="NM_063251.8"/>
</dbReference>
<dbReference type="BioGRID" id="39598">
    <property type="interactions" value="2"/>
</dbReference>
<dbReference type="FunCoup" id="P45968">
    <property type="interactions" value="630"/>
</dbReference>
<dbReference type="IntAct" id="P45968">
    <property type="interactions" value="1"/>
</dbReference>
<dbReference type="STRING" id="6239.T09A5.8.1"/>
<dbReference type="iPTMnet" id="P45968"/>
<dbReference type="PaxDb" id="6239-T09A5.8"/>
<dbReference type="PeptideAtlas" id="P45968"/>
<dbReference type="EnsemblMetazoa" id="T09A5.8.1">
    <property type="protein sequence ID" value="T09A5.8.1"/>
    <property type="gene ID" value="WBGene00011636"/>
</dbReference>
<dbReference type="GeneID" id="174265"/>
<dbReference type="KEGG" id="cel:CELE_T09A5.8"/>
<dbReference type="UCSC" id="T09A5.8">
    <property type="organism name" value="c. elegans"/>
</dbReference>
<dbReference type="AGR" id="WB:WBGene00011636"/>
<dbReference type="CTD" id="174265"/>
<dbReference type="WormBase" id="T09A5.8">
    <property type="protein sequence ID" value="CE01089"/>
    <property type="gene ID" value="WBGene00011636"/>
    <property type="gene designation" value="cec-3"/>
</dbReference>
<dbReference type="eggNOG" id="KOG1911">
    <property type="taxonomic scope" value="Eukaryota"/>
</dbReference>
<dbReference type="HOGENOM" id="CLU_850545_0_0_1"/>
<dbReference type="InParanoid" id="P45968"/>
<dbReference type="OMA" id="FISRCEF"/>
<dbReference type="OrthoDB" id="5843976at2759"/>
<dbReference type="PRO" id="PR:P45968"/>
<dbReference type="Proteomes" id="UP000001940">
    <property type="component" value="Chromosome II"/>
</dbReference>
<dbReference type="Bgee" id="WBGene00011636">
    <property type="expression patterns" value="Expressed in germ line (C elegans) and 4 other cell types or tissues"/>
</dbReference>
<dbReference type="GO" id="GO:0005634">
    <property type="term" value="C:nucleus"/>
    <property type="evidence" value="ECO:0000314"/>
    <property type="project" value="WormBase"/>
</dbReference>
<dbReference type="GO" id="GO:0005721">
    <property type="term" value="C:pericentric heterochromatin"/>
    <property type="evidence" value="ECO:0000318"/>
    <property type="project" value="GO_Central"/>
</dbReference>
<dbReference type="GO" id="GO:0003682">
    <property type="term" value="F:chromatin binding"/>
    <property type="evidence" value="ECO:0000318"/>
    <property type="project" value="GO_Central"/>
</dbReference>
<dbReference type="GO" id="GO:0003677">
    <property type="term" value="F:DNA binding"/>
    <property type="evidence" value="ECO:0007669"/>
    <property type="project" value="UniProtKB-KW"/>
</dbReference>
<dbReference type="GO" id="GO:0035064">
    <property type="term" value="F:methylated histone binding"/>
    <property type="evidence" value="ECO:0000318"/>
    <property type="project" value="GO_Central"/>
</dbReference>
<dbReference type="GO" id="GO:0031507">
    <property type="term" value="P:heterochromatin formation"/>
    <property type="evidence" value="ECO:0000318"/>
    <property type="project" value="GO_Central"/>
</dbReference>
<dbReference type="GO" id="GO:0010629">
    <property type="term" value="P:negative regulation of gene expression"/>
    <property type="evidence" value="ECO:0000315"/>
    <property type="project" value="UniProtKB"/>
</dbReference>
<dbReference type="CDD" id="cd00024">
    <property type="entry name" value="CD_CSD"/>
    <property type="match status" value="1"/>
</dbReference>
<dbReference type="Gene3D" id="2.40.50.40">
    <property type="match status" value="1"/>
</dbReference>
<dbReference type="InterPro" id="IPR016197">
    <property type="entry name" value="Chromo-like_dom_sf"/>
</dbReference>
<dbReference type="InterPro" id="IPR000953">
    <property type="entry name" value="Chromo/chromo_shadow_dom"/>
</dbReference>
<dbReference type="InterPro" id="IPR023780">
    <property type="entry name" value="Chromo_domain"/>
</dbReference>
<dbReference type="InterPro" id="IPR023779">
    <property type="entry name" value="Chromodomain_CS"/>
</dbReference>
<dbReference type="InterPro" id="IPR051219">
    <property type="entry name" value="Heterochromatin_chromo-domain"/>
</dbReference>
<dbReference type="PANTHER" id="PTHR22812">
    <property type="entry name" value="CHROMOBOX PROTEIN"/>
    <property type="match status" value="1"/>
</dbReference>
<dbReference type="Pfam" id="PF00385">
    <property type="entry name" value="Chromo"/>
    <property type="match status" value="1"/>
</dbReference>
<dbReference type="SMART" id="SM00298">
    <property type="entry name" value="CHROMO"/>
    <property type="match status" value="1"/>
</dbReference>
<dbReference type="SUPFAM" id="SSF54160">
    <property type="entry name" value="Chromo domain-like"/>
    <property type="match status" value="1"/>
</dbReference>
<dbReference type="PROSITE" id="PS00598">
    <property type="entry name" value="CHROMO_1"/>
    <property type="match status" value="1"/>
</dbReference>
<dbReference type="PROSITE" id="PS50013">
    <property type="entry name" value="CHROMO_2"/>
    <property type="match status" value="1"/>
</dbReference>
<feature type="chain" id="PRO_0000080243" description="Chromo domain-containing protein cec-3">
    <location>
        <begin position="1"/>
        <end position="339"/>
    </location>
</feature>
<feature type="domain" description="Chromo" evidence="1">
    <location>
        <begin position="24"/>
        <end position="84"/>
    </location>
</feature>
<feature type="region of interest" description="Disordered" evidence="2">
    <location>
        <begin position="1"/>
        <end position="21"/>
    </location>
</feature>
<feature type="region of interest" description="Disordered" evidence="2">
    <location>
        <begin position="91"/>
        <end position="199"/>
    </location>
</feature>
<feature type="region of interest" description="Disordered" evidence="2">
    <location>
        <begin position="215"/>
        <end position="272"/>
    </location>
</feature>
<feature type="compositionally biased region" description="Basic residues" evidence="2">
    <location>
        <begin position="91"/>
        <end position="105"/>
    </location>
</feature>
<feature type="compositionally biased region" description="Basic and acidic residues" evidence="2">
    <location>
        <begin position="106"/>
        <end position="117"/>
    </location>
</feature>
<feature type="compositionally biased region" description="Basic and acidic residues" evidence="2">
    <location>
        <begin position="171"/>
        <end position="183"/>
    </location>
</feature>
<feature type="compositionally biased region" description="Acidic residues" evidence="2">
    <location>
        <begin position="184"/>
        <end position="193"/>
    </location>
</feature>
<feature type="compositionally biased region" description="Basic and acidic residues" evidence="2">
    <location>
        <begin position="230"/>
        <end position="241"/>
    </location>
</feature>
<feature type="compositionally biased region" description="Low complexity" evidence="2">
    <location>
        <begin position="242"/>
        <end position="251"/>
    </location>
</feature>
<feature type="mutagenesis site" description="Disrupts binding to H3K9-methylated peptides." evidence="4">
    <original>F</original>
    <variation>A</variation>
    <location>
        <position position="24"/>
    </location>
</feature>
<proteinExistence type="evidence at protein level"/>
<sequence>MSNEGSREESREPEAREGKSDEIFEVEKILAHKVTDNLLVLQVRWLGYGADEDTWEPEEDLQECASEVVAEYYKKLKVTDKTELIELLQKQIKKNKSQKSKKRSKTVSDHESNHDSDGSYGTPKTSKKSKKSAKNETPVSSKVPKVPTKAALKSYEATVSGPVAPNNAKKAAMEVRDTRRNWLDEESSDDEAETTAPLSDVEKIASKVKVVKAVEEKAEEPVKRPSTPPKPREVVIKKDPSESPVASASSVIPTSKRKSINAETSNGRQRTLAPPVIVKDETTWTVDGIARHTDVDNTKTKLILMTNSATGERKVVEGREAFELDGWALAKYLLDRCEF</sequence>